<evidence type="ECO:0000250" key="1"/>
<evidence type="ECO:0000305" key="2"/>
<sequence>MQLTESLGIVLFNRNYREDDKLVKIFTEVAGKQMFFVKHISRSKMSSIIQPLTIADFIFKLNDTGLSYVVDYSNVNTYRYINNDIFRLAYASYVLALADAAIADNESDSHLFTFLKKTLDLMEEGLDYEILTNIFEIQILDRFGISLNFHECAICHRTDLPLDFSHRFSAVLCSEHYYKDNRRNHLDPNVIYLLSRFQKITFDDLRTISLNKDIKKKLRQFIDELYHDYVGIKLKSKTFIDNLVKWGDIMK</sequence>
<reference key="1">
    <citation type="journal article" date="2001" name="Proc. Natl. Acad. Sci. U.S.A.">
        <title>Complete genome sequence of an M1 strain of Streptococcus pyogenes.</title>
        <authorList>
            <person name="Ferretti J.J."/>
            <person name="McShan W.M."/>
            <person name="Ajdic D.J."/>
            <person name="Savic D.J."/>
            <person name="Savic G."/>
            <person name="Lyon K."/>
            <person name="Primeaux C."/>
            <person name="Sezate S."/>
            <person name="Suvorov A.N."/>
            <person name="Kenton S."/>
            <person name="Lai H.S."/>
            <person name="Lin S.P."/>
            <person name="Qian Y."/>
            <person name="Jia H.G."/>
            <person name="Najar F.Z."/>
            <person name="Ren Q."/>
            <person name="Zhu H."/>
            <person name="Song L."/>
            <person name="White J."/>
            <person name="Yuan X."/>
            <person name="Clifton S.W."/>
            <person name="Roe B.A."/>
            <person name="McLaughlin R.E."/>
        </authorList>
    </citation>
    <scope>NUCLEOTIDE SEQUENCE [LARGE SCALE GENOMIC DNA]</scope>
    <source>
        <strain>ATCC 700294 / SF370 / Serotype M1</strain>
    </source>
</reference>
<reference key="2">
    <citation type="journal article" date="2005" name="J. Infect. Dis.">
        <title>Evolutionary origin and emergence of a highly successful clone of serotype M1 group A Streptococcus involved multiple horizontal gene transfer events.</title>
        <authorList>
            <person name="Sumby P."/>
            <person name="Porcella S.F."/>
            <person name="Madrigal A.G."/>
            <person name="Barbian K.D."/>
            <person name="Virtaneva K."/>
            <person name="Ricklefs S.M."/>
            <person name="Sturdevant D.E."/>
            <person name="Graham M.R."/>
            <person name="Vuopio-Varkila J."/>
            <person name="Hoe N.P."/>
            <person name="Musser J.M."/>
        </authorList>
    </citation>
    <scope>NUCLEOTIDE SEQUENCE [LARGE SCALE GENOMIC DNA]</scope>
    <source>
        <strain>ATCC BAA-947 / MGAS5005 / Serotype M1</strain>
    </source>
</reference>
<dbReference type="EMBL" id="AE004092">
    <property type="protein sequence ID" value="AAK33160.1"/>
    <property type="molecule type" value="Genomic_DNA"/>
</dbReference>
<dbReference type="EMBL" id="CP000017">
    <property type="protein sequence ID" value="AAZ50638.1"/>
    <property type="molecule type" value="Genomic_DNA"/>
</dbReference>
<dbReference type="RefSeq" id="NP_268438.1">
    <property type="nucleotide sequence ID" value="NC_002737.2"/>
</dbReference>
<dbReference type="SMR" id="P65987"/>
<dbReference type="PaxDb" id="1314-HKU360_00051"/>
<dbReference type="KEGG" id="spy:SPy_0021"/>
<dbReference type="KEGG" id="spz:M5005_Spy0019"/>
<dbReference type="PATRIC" id="fig|160490.10.peg.20"/>
<dbReference type="HOGENOM" id="CLU_066632_4_0_9"/>
<dbReference type="OMA" id="LCTQSET"/>
<dbReference type="Proteomes" id="UP000000750">
    <property type="component" value="Chromosome"/>
</dbReference>
<dbReference type="GO" id="GO:0043590">
    <property type="term" value="C:bacterial nucleoid"/>
    <property type="evidence" value="ECO:0007669"/>
    <property type="project" value="TreeGrafter"/>
</dbReference>
<dbReference type="GO" id="GO:0006310">
    <property type="term" value="P:DNA recombination"/>
    <property type="evidence" value="ECO:0007669"/>
    <property type="project" value="UniProtKB-UniRule"/>
</dbReference>
<dbReference type="GO" id="GO:0006302">
    <property type="term" value="P:double-strand break repair"/>
    <property type="evidence" value="ECO:0007669"/>
    <property type="project" value="TreeGrafter"/>
</dbReference>
<dbReference type="Gene3D" id="2.40.50.140">
    <property type="entry name" value="Nucleic acid-binding proteins"/>
    <property type="match status" value="1"/>
</dbReference>
<dbReference type="Gene3D" id="1.20.1440.120">
    <property type="entry name" value="Recombination protein O, C-terminal domain"/>
    <property type="match status" value="1"/>
</dbReference>
<dbReference type="HAMAP" id="MF_00201">
    <property type="entry name" value="RecO"/>
    <property type="match status" value="1"/>
</dbReference>
<dbReference type="InterPro" id="IPR037278">
    <property type="entry name" value="ARFGAP/RecO"/>
</dbReference>
<dbReference type="InterPro" id="IPR022572">
    <property type="entry name" value="DNA_rep/recomb_RecO_N"/>
</dbReference>
<dbReference type="InterPro" id="IPR012340">
    <property type="entry name" value="NA-bd_OB-fold"/>
</dbReference>
<dbReference type="InterPro" id="IPR003717">
    <property type="entry name" value="RecO"/>
</dbReference>
<dbReference type="InterPro" id="IPR042242">
    <property type="entry name" value="RecO_C"/>
</dbReference>
<dbReference type="NCBIfam" id="TIGR00613">
    <property type="entry name" value="reco"/>
    <property type="match status" value="1"/>
</dbReference>
<dbReference type="PANTHER" id="PTHR33991">
    <property type="entry name" value="DNA REPAIR PROTEIN RECO"/>
    <property type="match status" value="1"/>
</dbReference>
<dbReference type="PANTHER" id="PTHR33991:SF1">
    <property type="entry name" value="DNA REPAIR PROTEIN RECO"/>
    <property type="match status" value="1"/>
</dbReference>
<dbReference type="Pfam" id="PF02565">
    <property type="entry name" value="RecO_C"/>
    <property type="match status" value="1"/>
</dbReference>
<dbReference type="Pfam" id="PF11967">
    <property type="entry name" value="RecO_N"/>
    <property type="match status" value="1"/>
</dbReference>
<dbReference type="SUPFAM" id="SSF57863">
    <property type="entry name" value="ArfGap/RecO-like zinc finger"/>
    <property type="match status" value="1"/>
</dbReference>
<dbReference type="SUPFAM" id="SSF50249">
    <property type="entry name" value="Nucleic acid-binding proteins"/>
    <property type="match status" value="1"/>
</dbReference>
<accession>P65987</accession>
<accession>Q491T0</accession>
<accession>Q9A1Z6</accession>
<name>RECO_STRP1</name>
<comment type="function">
    <text evidence="1">Involved in DNA repair and RecF pathway recombination.</text>
</comment>
<comment type="similarity">
    <text evidence="2">Belongs to the RecO family.</text>
</comment>
<feature type="chain" id="PRO_0000205011" description="DNA repair protein RecO">
    <location>
        <begin position="1"/>
        <end position="251"/>
    </location>
</feature>
<keyword id="KW-0227">DNA damage</keyword>
<keyword id="KW-0233">DNA recombination</keyword>
<keyword id="KW-0234">DNA repair</keyword>
<keyword id="KW-1185">Reference proteome</keyword>
<protein>
    <recommendedName>
        <fullName>DNA repair protein RecO</fullName>
    </recommendedName>
    <alternativeName>
        <fullName>Recombination protein O</fullName>
    </alternativeName>
</protein>
<organism>
    <name type="scientific">Streptococcus pyogenes serotype M1</name>
    <dbReference type="NCBI Taxonomy" id="301447"/>
    <lineage>
        <taxon>Bacteria</taxon>
        <taxon>Bacillati</taxon>
        <taxon>Bacillota</taxon>
        <taxon>Bacilli</taxon>
        <taxon>Lactobacillales</taxon>
        <taxon>Streptococcaceae</taxon>
        <taxon>Streptococcus</taxon>
    </lineage>
</organism>
<gene>
    <name type="primary">recO</name>
    <name type="ordered locus">SPy_0021</name>
    <name type="ordered locus">M5005_Spy0019</name>
</gene>
<proteinExistence type="inferred from homology"/>